<gene>
    <name evidence="1" type="primary">trmD</name>
    <name type="ordered locus">Lcho_0683</name>
</gene>
<sequence length="249" mass="27231">MRFDVLTLFPELFEPFLHAGVTRRAFESGQVDVKLWQLRDFAEDNYKRVDDRPYGGGPGMVMLVEPLERALRAVRAQAGDAAPLIHFTPAGAPMTQKRVRELAAGPGAVLLCGRYEGIDQRFISRHVDEEISLGDFVLSGGELPALALLDAVTRLQPGVLNDAASHQQDSFSDGLLDCPHYSRPERLGEAAADAVPAVLLSGHHARVASWRREQQLRITALRRPDLIDAARAAGALSPADERLLASLQL</sequence>
<protein>
    <recommendedName>
        <fullName evidence="1">tRNA (guanine-N(1)-)-methyltransferase</fullName>
        <ecNumber evidence="1">2.1.1.228</ecNumber>
    </recommendedName>
    <alternativeName>
        <fullName evidence="1">M1G-methyltransferase</fullName>
    </alternativeName>
    <alternativeName>
        <fullName evidence="1">tRNA [GM37] methyltransferase</fullName>
    </alternativeName>
</protein>
<accession>B1Y0H7</accession>
<keyword id="KW-0963">Cytoplasm</keyword>
<keyword id="KW-0489">Methyltransferase</keyword>
<keyword id="KW-1185">Reference proteome</keyword>
<keyword id="KW-0949">S-adenosyl-L-methionine</keyword>
<keyword id="KW-0808">Transferase</keyword>
<keyword id="KW-0819">tRNA processing</keyword>
<organism>
    <name type="scientific">Leptothrix cholodnii (strain ATCC 51168 / LMG 8142 / SP-6)</name>
    <name type="common">Leptothrix discophora (strain SP-6)</name>
    <dbReference type="NCBI Taxonomy" id="395495"/>
    <lineage>
        <taxon>Bacteria</taxon>
        <taxon>Pseudomonadati</taxon>
        <taxon>Pseudomonadota</taxon>
        <taxon>Betaproteobacteria</taxon>
        <taxon>Burkholderiales</taxon>
        <taxon>Sphaerotilaceae</taxon>
        <taxon>Leptothrix</taxon>
    </lineage>
</organism>
<name>TRMD_LEPCP</name>
<feature type="chain" id="PRO_1000130185" description="tRNA (guanine-N(1)-)-methyltransferase">
    <location>
        <begin position="1"/>
        <end position="249"/>
    </location>
</feature>
<feature type="binding site" evidence="1">
    <location>
        <position position="113"/>
    </location>
    <ligand>
        <name>S-adenosyl-L-methionine</name>
        <dbReference type="ChEBI" id="CHEBI:59789"/>
    </ligand>
</feature>
<feature type="binding site" evidence="1">
    <location>
        <begin position="133"/>
        <end position="138"/>
    </location>
    <ligand>
        <name>S-adenosyl-L-methionine</name>
        <dbReference type="ChEBI" id="CHEBI:59789"/>
    </ligand>
</feature>
<dbReference type="EC" id="2.1.1.228" evidence="1"/>
<dbReference type="EMBL" id="CP001013">
    <property type="protein sequence ID" value="ACB32958.1"/>
    <property type="molecule type" value="Genomic_DNA"/>
</dbReference>
<dbReference type="RefSeq" id="WP_012345720.1">
    <property type="nucleotide sequence ID" value="NC_010524.1"/>
</dbReference>
<dbReference type="SMR" id="B1Y0H7"/>
<dbReference type="STRING" id="395495.Lcho_0683"/>
<dbReference type="KEGG" id="lch:Lcho_0683"/>
<dbReference type="eggNOG" id="COG0336">
    <property type="taxonomic scope" value="Bacteria"/>
</dbReference>
<dbReference type="HOGENOM" id="CLU_047363_0_1_4"/>
<dbReference type="OrthoDB" id="9807416at2"/>
<dbReference type="Proteomes" id="UP000001693">
    <property type="component" value="Chromosome"/>
</dbReference>
<dbReference type="GO" id="GO:0005829">
    <property type="term" value="C:cytosol"/>
    <property type="evidence" value="ECO:0007669"/>
    <property type="project" value="TreeGrafter"/>
</dbReference>
<dbReference type="GO" id="GO:0052906">
    <property type="term" value="F:tRNA (guanine(37)-N1)-methyltransferase activity"/>
    <property type="evidence" value="ECO:0007669"/>
    <property type="project" value="UniProtKB-UniRule"/>
</dbReference>
<dbReference type="GO" id="GO:0002939">
    <property type="term" value="P:tRNA N1-guanine methylation"/>
    <property type="evidence" value="ECO:0007669"/>
    <property type="project" value="TreeGrafter"/>
</dbReference>
<dbReference type="CDD" id="cd18080">
    <property type="entry name" value="TrmD-like"/>
    <property type="match status" value="1"/>
</dbReference>
<dbReference type="FunFam" id="3.40.1280.10:FF:000001">
    <property type="entry name" value="tRNA (guanine-N(1)-)-methyltransferase"/>
    <property type="match status" value="1"/>
</dbReference>
<dbReference type="Gene3D" id="3.40.1280.10">
    <property type="match status" value="1"/>
</dbReference>
<dbReference type="Gene3D" id="1.10.1270.20">
    <property type="entry name" value="tRNA(m1g37)methyltransferase, domain 2"/>
    <property type="match status" value="1"/>
</dbReference>
<dbReference type="HAMAP" id="MF_00605">
    <property type="entry name" value="TrmD"/>
    <property type="match status" value="1"/>
</dbReference>
<dbReference type="InterPro" id="IPR029028">
    <property type="entry name" value="Alpha/beta_knot_MTases"/>
</dbReference>
<dbReference type="InterPro" id="IPR023148">
    <property type="entry name" value="tRNA_m1G_MeTrfase_C_sf"/>
</dbReference>
<dbReference type="InterPro" id="IPR002649">
    <property type="entry name" value="tRNA_m1G_MeTrfase_TrmD"/>
</dbReference>
<dbReference type="InterPro" id="IPR029026">
    <property type="entry name" value="tRNA_m1G_MTases_N"/>
</dbReference>
<dbReference type="InterPro" id="IPR016009">
    <property type="entry name" value="tRNA_MeTrfase_TRMD/TRM10"/>
</dbReference>
<dbReference type="NCBIfam" id="NF000648">
    <property type="entry name" value="PRK00026.1"/>
    <property type="match status" value="1"/>
</dbReference>
<dbReference type="NCBIfam" id="TIGR00088">
    <property type="entry name" value="trmD"/>
    <property type="match status" value="1"/>
</dbReference>
<dbReference type="PANTHER" id="PTHR46417">
    <property type="entry name" value="TRNA (GUANINE-N(1)-)-METHYLTRANSFERASE"/>
    <property type="match status" value="1"/>
</dbReference>
<dbReference type="PANTHER" id="PTHR46417:SF1">
    <property type="entry name" value="TRNA (GUANINE-N(1)-)-METHYLTRANSFERASE"/>
    <property type="match status" value="1"/>
</dbReference>
<dbReference type="Pfam" id="PF01746">
    <property type="entry name" value="tRNA_m1G_MT"/>
    <property type="match status" value="1"/>
</dbReference>
<dbReference type="PIRSF" id="PIRSF000386">
    <property type="entry name" value="tRNA_mtase"/>
    <property type="match status" value="1"/>
</dbReference>
<dbReference type="SUPFAM" id="SSF75217">
    <property type="entry name" value="alpha/beta knot"/>
    <property type="match status" value="1"/>
</dbReference>
<reference key="1">
    <citation type="submission" date="2008-03" db="EMBL/GenBank/DDBJ databases">
        <title>Complete sequence of Leptothrix cholodnii SP-6.</title>
        <authorList>
            <consortium name="US DOE Joint Genome Institute"/>
            <person name="Copeland A."/>
            <person name="Lucas S."/>
            <person name="Lapidus A."/>
            <person name="Glavina del Rio T."/>
            <person name="Dalin E."/>
            <person name="Tice H."/>
            <person name="Bruce D."/>
            <person name="Goodwin L."/>
            <person name="Pitluck S."/>
            <person name="Chertkov O."/>
            <person name="Brettin T."/>
            <person name="Detter J.C."/>
            <person name="Han C."/>
            <person name="Kuske C.R."/>
            <person name="Schmutz J."/>
            <person name="Larimer F."/>
            <person name="Land M."/>
            <person name="Hauser L."/>
            <person name="Kyrpides N."/>
            <person name="Lykidis A."/>
            <person name="Emerson D."/>
            <person name="Richardson P."/>
        </authorList>
    </citation>
    <scope>NUCLEOTIDE SEQUENCE [LARGE SCALE GENOMIC DNA]</scope>
    <source>
        <strain>ATCC 51168 / LMG 8142 / SP-6</strain>
    </source>
</reference>
<evidence type="ECO:0000255" key="1">
    <source>
        <dbReference type="HAMAP-Rule" id="MF_00605"/>
    </source>
</evidence>
<comment type="function">
    <text evidence="1">Specifically methylates guanosine-37 in various tRNAs.</text>
</comment>
<comment type="catalytic activity">
    <reaction evidence="1">
        <text>guanosine(37) in tRNA + S-adenosyl-L-methionine = N(1)-methylguanosine(37) in tRNA + S-adenosyl-L-homocysteine + H(+)</text>
        <dbReference type="Rhea" id="RHEA:36899"/>
        <dbReference type="Rhea" id="RHEA-COMP:10145"/>
        <dbReference type="Rhea" id="RHEA-COMP:10147"/>
        <dbReference type="ChEBI" id="CHEBI:15378"/>
        <dbReference type="ChEBI" id="CHEBI:57856"/>
        <dbReference type="ChEBI" id="CHEBI:59789"/>
        <dbReference type="ChEBI" id="CHEBI:73542"/>
        <dbReference type="ChEBI" id="CHEBI:74269"/>
        <dbReference type="EC" id="2.1.1.228"/>
    </reaction>
</comment>
<comment type="subunit">
    <text evidence="1">Homodimer.</text>
</comment>
<comment type="subcellular location">
    <subcellularLocation>
        <location evidence="1">Cytoplasm</location>
    </subcellularLocation>
</comment>
<comment type="similarity">
    <text evidence="1">Belongs to the RNA methyltransferase TrmD family.</text>
</comment>
<proteinExistence type="inferred from homology"/>